<proteinExistence type="evidence at protein level"/>
<accession>P41813</accession>
<accession>D6W1B1</accession>
<keyword id="KW-0963">Cytoplasm</keyword>
<keyword id="KW-0238">DNA-binding</keyword>
<keyword id="KW-0539">Nucleus</keyword>
<keyword id="KW-0597">Phosphoprotein</keyword>
<keyword id="KW-1185">Reference proteome</keyword>
<keyword id="KW-0804">Transcription</keyword>
<keyword id="KW-0805">Transcription regulation</keyword>
<organism>
    <name type="scientific">Saccharomyces cerevisiae (strain ATCC 204508 / S288c)</name>
    <name type="common">Baker's yeast</name>
    <dbReference type="NCBI Taxonomy" id="559292"/>
    <lineage>
        <taxon>Eukaryota</taxon>
        <taxon>Fungi</taxon>
        <taxon>Dikarya</taxon>
        <taxon>Ascomycota</taxon>
        <taxon>Saccharomycotina</taxon>
        <taxon>Saccharomycetes</taxon>
        <taxon>Saccharomycetales</taxon>
        <taxon>Saccharomycetaceae</taxon>
        <taxon>Saccharomyces</taxon>
    </lineage>
</organism>
<name>FKH2_YEAST</name>
<sequence>MSSSNFNEMNELNMTQTNYGSTKYTAQHHQGVINAIISSLTAPDQPTTVSLQYSNDKNMATEIQAYAKLSGPNWTYYVKDLEVSIGRNTDPLNSALQENSDGVKNSYRVNIDLGPAKVVSRKHAIIKYNMNIGGWELHILGRNGAKVNFQRTHNGPNNPPIRLSSGTLLDIGGTQMMFILPDSDPVVAPICIEHLMPNLINMFGLEGNNNPLLRDIIKQSNYAKQRQLTSNQQIKGFKLYGSGGNAPFGSGANLGPSEQGIFNNNNNSKNKNGYFTSINPNYTASTTTSNTINPQAASPQGPPNTIIAANFVDSYKSSNAYPQALDFTSDLSHDENRNVKPPHSYATMITQAILSSPEGVISLADIYKYISSNYAYYRFAKSGWQNSIRHNLSLNKAFEKVPRRPNEPGKGMKWRISESYQQEFLNKWNTGKVGKIRRGSSVARQLQLHMAKFNSLPMEMDYRLSLNMAQPPKRQLQSHNVLEPSNNNIIEGFVQHVPSKGNLPASQQSQPPVSHQNQSQQPPPQEQRQEIQFTFADTQNRNIALARPIKTPQLQAPNSNANLNQNNMKEYKESLHPPAISISQMNRQSPNNALVSFTNACANSKIINNISDSADKSTNNNGGTKMNLPAISTSSLDENGNLEPTTTTSSGNSNSVPQTGTTTSSLAANSLRLSQPYDTLLRSPTKAFHITAMEAYTPERGSANRARSPLHSNSNNTNNNGANNSNLQTSGMENKQTGLVLDSNVLKSMESNNDNRRLTPSTSKSQNVKSSPGVWNLLQFSSTNNTPAADSGGNKRGFSINPDIKAKENENATSEKDSDSNSNDLETKDINSSPLKNQGGSTANAKELILDTDGAKISIINN</sequence>
<dbReference type="EMBL" id="L38850">
    <property type="protein sequence ID" value="AAA60939.1"/>
    <property type="molecule type" value="Genomic_DNA"/>
</dbReference>
<dbReference type="EMBL" id="X86470">
    <property type="protein sequence ID" value="CAA60193.1"/>
    <property type="molecule type" value="Genomic_DNA"/>
</dbReference>
<dbReference type="EMBL" id="Z71343">
    <property type="protein sequence ID" value="CAA95941.1"/>
    <property type="molecule type" value="Genomic_DNA"/>
</dbReference>
<dbReference type="EMBL" id="Z71344">
    <property type="protein sequence ID" value="CAA95942.1"/>
    <property type="molecule type" value="Genomic_DNA"/>
</dbReference>
<dbReference type="EMBL" id="U12141">
    <property type="protein sequence ID" value="AAA99643.1"/>
    <property type="molecule type" value="Genomic_DNA"/>
</dbReference>
<dbReference type="EMBL" id="BK006947">
    <property type="protein sequence ID" value="DAA10477.1"/>
    <property type="molecule type" value="Genomic_DNA"/>
</dbReference>
<dbReference type="PIR" id="S53913">
    <property type="entry name" value="S53913"/>
</dbReference>
<dbReference type="RefSeq" id="NP_014331.3">
    <property type="nucleotide sequence ID" value="NM_001182906.3"/>
</dbReference>
<dbReference type="SMR" id="P41813"/>
<dbReference type="BioGRID" id="35755">
    <property type="interactions" value="209"/>
</dbReference>
<dbReference type="DIP" id="DIP-5944N"/>
<dbReference type="FunCoup" id="P41813">
    <property type="interactions" value="1812"/>
</dbReference>
<dbReference type="IntAct" id="P41813">
    <property type="interactions" value="7"/>
</dbReference>
<dbReference type="MINT" id="P41813"/>
<dbReference type="STRING" id="4932.YNL068C"/>
<dbReference type="iPTMnet" id="P41813"/>
<dbReference type="PaxDb" id="4932-YNL068C"/>
<dbReference type="PeptideAtlas" id="P41813"/>
<dbReference type="EnsemblFungi" id="YNL068C_mRNA">
    <property type="protein sequence ID" value="YNL068C"/>
    <property type="gene ID" value="YNL068C"/>
</dbReference>
<dbReference type="GeneID" id="855656"/>
<dbReference type="KEGG" id="sce:YNL068C"/>
<dbReference type="AGR" id="SGD:S000005012"/>
<dbReference type="SGD" id="S000005012">
    <property type="gene designation" value="FKH2"/>
</dbReference>
<dbReference type="VEuPathDB" id="FungiDB:YNL068C"/>
<dbReference type="eggNOG" id="KOG2294">
    <property type="taxonomic scope" value="Eukaryota"/>
</dbReference>
<dbReference type="GeneTree" id="ENSGT00940000173882"/>
<dbReference type="HOGENOM" id="CLU_007090_2_0_1"/>
<dbReference type="InParanoid" id="P41813"/>
<dbReference type="OMA" id="YYRFAKT"/>
<dbReference type="OrthoDB" id="5954824at2759"/>
<dbReference type="BioCyc" id="YEAST:G3O-33098-MONOMER"/>
<dbReference type="BioGRID-ORCS" id="855656">
    <property type="hits" value="2 hits in 13 CRISPR screens"/>
</dbReference>
<dbReference type="PRO" id="PR:P41813"/>
<dbReference type="Proteomes" id="UP000002311">
    <property type="component" value="Chromosome XIV"/>
</dbReference>
<dbReference type="RNAct" id="P41813">
    <property type="molecule type" value="protein"/>
</dbReference>
<dbReference type="GO" id="GO:0005829">
    <property type="term" value="C:cytosol"/>
    <property type="evidence" value="ECO:0000314"/>
    <property type="project" value="SGD"/>
</dbReference>
<dbReference type="GO" id="GO:0005634">
    <property type="term" value="C:nucleus"/>
    <property type="evidence" value="ECO:0000314"/>
    <property type="project" value="SGD"/>
</dbReference>
<dbReference type="GO" id="GO:0003682">
    <property type="term" value="F:chromatin binding"/>
    <property type="evidence" value="ECO:0000314"/>
    <property type="project" value="SGD"/>
</dbReference>
<dbReference type="GO" id="GO:0003688">
    <property type="term" value="F:DNA replication origin binding"/>
    <property type="evidence" value="ECO:0000314"/>
    <property type="project" value="SGD"/>
</dbReference>
<dbReference type="GO" id="GO:0000981">
    <property type="term" value="F:DNA-binding transcription factor activity, RNA polymerase II-specific"/>
    <property type="evidence" value="ECO:0000318"/>
    <property type="project" value="GO_Central"/>
</dbReference>
<dbReference type="GO" id="GO:0000978">
    <property type="term" value="F:RNA polymerase II cis-regulatory region sequence-specific DNA binding"/>
    <property type="evidence" value="ECO:0000318"/>
    <property type="project" value="GO_Central"/>
</dbReference>
<dbReference type="GO" id="GO:0061629">
    <property type="term" value="F:RNA polymerase II-specific DNA-binding transcription factor binding"/>
    <property type="evidence" value="ECO:0000314"/>
    <property type="project" value="SGD"/>
</dbReference>
<dbReference type="GO" id="GO:0043565">
    <property type="term" value="F:sequence-specific DNA binding"/>
    <property type="evidence" value="ECO:0000314"/>
    <property type="project" value="SGD"/>
</dbReference>
<dbReference type="GO" id="GO:0003713">
    <property type="term" value="F:transcription coactivator activity"/>
    <property type="evidence" value="ECO:0000314"/>
    <property type="project" value="SGD"/>
</dbReference>
<dbReference type="GO" id="GO:0003712">
    <property type="term" value="F:transcription coregulator activity"/>
    <property type="evidence" value="ECO:0000314"/>
    <property type="project" value="SGD"/>
</dbReference>
<dbReference type="GO" id="GO:0006338">
    <property type="term" value="P:chromatin remodeling"/>
    <property type="evidence" value="ECO:0000315"/>
    <property type="project" value="SGD"/>
</dbReference>
<dbReference type="GO" id="GO:0000082">
    <property type="term" value="P:G1/S transition of mitotic cell cycle"/>
    <property type="evidence" value="ECO:0000316"/>
    <property type="project" value="SGD"/>
</dbReference>
<dbReference type="GO" id="GO:0000086">
    <property type="term" value="P:G2/M transition of mitotic cell cycle"/>
    <property type="evidence" value="ECO:0000315"/>
    <property type="project" value="SGD"/>
</dbReference>
<dbReference type="GO" id="GO:2000221">
    <property type="term" value="P:negative regulation of pseudohyphal growth"/>
    <property type="evidence" value="ECO:0000315"/>
    <property type="project" value="SGD"/>
</dbReference>
<dbReference type="GO" id="GO:0061186">
    <property type="term" value="P:negative regulation of silent mating-type cassette heterochromatin formation"/>
    <property type="evidence" value="ECO:0000315"/>
    <property type="project" value="SGD"/>
</dbReference>
<dbReference type="GO" id="GO:0000122">
    <property type="term" value="P:negative regulation of transcription by RNA polymerase II"/>
    <property type="evidence" value="ECO:0000316"/>
    <property type="project" value="SGD"/>
</dbReference>
<dbReference type="GO" id="GO:1903468">
    <property type="term" value="P:positive regulation of DNA replication initiation"/>
    <property type="evidence" value="ECO:0000315"/>
    <property type="project" value="SGD"/>
</dbReference>
<dbReference type="GO" id="GO:0032298">
    <property type="term" value="P:positive regulation of DNA-templated DNA replication initiation"/>
    <property type="evidence" value="ECO:0000315"/>
    <property type="project" value="SGD"/>
</dbReference>
<dbReference type="GO" id="GO:0045944">
    <property type="term" value="P:positive regulation of transcription by RNA polymerase II"/>
    <property type="evidence" value="ECO:0000315"/>
    <property type="project" value="SGD"/>
</dbReference>
<dbReference type="GO" id="GO:0032968">
    <property type="term" value="P:positive regulation of transcription elongation by RNA polymerase II"/>
    <property type="evidence" value="ECO:0000315"/>
    <property type="project" value="SGD"/>
</dbReference>
<dbReference type="GO" id="GO:0006357">
    <property type="term" value="P:regulation of transcription by RNA polymerase II"/>
    <property type="evidence" value="ECO:0000318"/>
    <property type="project" value="GO_Central"/>
</dbReference>
<dbReference type="CDD" id="cd00059">
    <property type="entry name" value="FH_FOX"/>
    <property type="match status" value="1"/>
</dbReference>
<dbReference type="CDD" id="cd22701">
    <property type="entry name" value="FHA_FKH1-like"/>
    <property type="match status" value="1"/>
</dbReference>
<dbReference type="FunFam" id="1.10.10.10:FF:000030">
    <property type="entry name" value="Forkhead box protein K2"/>
    <property type="match status" value="1"/>
</dbReference>
<dbReference type="FunFam" id="2.60.200.20:FF:000045">
    <property type="entry name" value="Forkhead protein"/>
    <property type="match status" value="1"/>
</dbReference>
<dbReference type="Gene3D" id="2.60.200.20">
    <property type="match status" value="1"/>
</dbReference>
<dbReference type="Gene3D" id="1.10.10.10">
    <property type="entry name" value="Winged helix-like DNA-binding domain superfamily/Winged helix DNA-binding domain"/>
    <property type="match status" value="1"/>
</dbReference>
<dbReference type="InterPro" id="IPR000253">
    <property type="entry name" value="FHA_dom"/>
</dbReference>
<dbReference type="InterPro" id="IPR001766">
    <property type="entry name" value="Fork_head_dom"/>
</dbReference>
<dbReference type="InterPro" id="IPR008984">
    <property type="entry name" value="SMAD_FHA_dom_sf"/>
</dbReference>
<dbReference type="InterPro" id="IPR018122">
    <property type="entry name" value="TF_fork_head_CS_1"/>
</dbReference>
<dbReference type="InterPro" id="IPR030456">
    <property type="entry name" value="TF_fork_head_CS_2"/>
</dbReference>
<dbReference type="InterPro" id="IPR036388">
    <property type="entry name" value="WH-like_DNA-bd_sf"/>
</dbReference>
<dbReference type="InterPro" id="IPR036390">
    <property type="entry name" value="WH_DNA-bd_sf"/>
</dbReference>
<dbReference type="PANTHER" id="PTHR45881">
    <property type="entry name" value="CHECKPOINT SUPPRESSOR 1-LIKE, ISOFORM A-RELATED"/>
    <property type="match status" value="1"/>
</dbReference>
<dbReference type="PANTHER" id="PTHR45881:SF1">
    <property type="entry name" value="FORK HEAD PROTEIN HOMOLOG 2"/>
    <property type="match status" value="1"/>
</dbReference>
<dbReference type="Pfam" id="PF00498">
    <property type="entry name" value="FHA"/>
    <property type="match status" value="1"/>
</dbReference>
<dbReference type="Pfam" id="PF00250">
    <property type="entry name" value="Forkhead"/>
    <property type="match status" value="1"/>
</dbReference>
<dbReference type="PRINTS" id="PR00053">
    <property type="entry name" value="FORKHEAD"/>
</dbReference>
<dbReference type="SMART" id="SM00339">
    <property type="entry name" value="FH"/>
    <property type="match status" value="1"/>
</dbReference>
<dbReference type="SMART" id="SM00240">
    <property type="entry name" value="FHA"/>
    <property type="match status" value="1"/>
</dbReference>
<dbReference type="SUPFAM" id="SSF49879">
    <property type="entry name" value="SMAD/FHA domain"/>
    <property type="match status" value="1"/>
</dbReference>
<dbReference type="SUPFAM" id="SSF46785">
    <property type="entry name" value="Winged helix' DNA-binding domain"/>
    <property type="match status" value="1"/>
</dbReference>
<dbReference type="PROSITE" id="PS50006">
    <property type="entry name" value="FHA_DOMAIN"/>
    <property type="match status" value="1"/>
</dbReference>
<dbReference type="PROSITE" id="PS00657">
    <property type="entry name" value="FORK_HEAD_1"/>
    <property type="match status" value="1"/>
</dbReference>
<dbReference type="PROSITE" id="PS00658">
    <property type="entry name" value="FORK_HEAD_2"/>
    <property type="match status" value="1"/>
</dbReference>
<dbReference type="PROSITE" id="PS50039">
    <property type="entry name" value="FORK_HEAD_3"/>
    <property type="match status" value="1"/>
</dbReference>
<comment type="function">
    <text evidence="4 5 6 7 8 9 12 13 14 16 17">Transcription factor that regulates the expression of the CLB2 cluster of genes during the G2/M phase of the mitotic cell cycle (PubMed:10894548, PubMed:10894549, PubMed:10959837, PubMed:11562353, PubMed:12702877, PubMed:17283050, PubMed:24504085). The CLB2 cluster of genes includes mitotic regulators such as CLB1, CLB2, CDC5 and CDC20 as well as SWI5 and ACE2, transcription factors required for the subsequent temporal wave of cell cycle regulated gene expression in the M/G1 phase interval (PubMed:10894548, PubMed:10959837, PubMed:11562353). Involved in HMRa silencing (PubMed:10747051). FKH1 and FKH2 associate with the coding regions of active genes and influence, in opposing ways, transcriptional elongation and termination, and coordinate early transcription elongation and pre-mRNA processing (PubMed:12702877). Both FKH1 and FKH2 play a role as regulators of lifespan in collaboration with the anaphase-promoting complex (APC), likely through combined regulation of stress response, genomic stability, and cell cycle regulation (PubMed:22438832). FKH1 and FKH2 function also in controlling yeast cell morphology by preventing preudohyphal growth (PubMed:10747051, PubMed:10894548). Acts as a rate-limiting replication origin activator via its interaction with the origin recognition complex (ORC) (PubMed:22265405, PubMed:26728715).</text>
</comment>
<comment type="subunit">
    <text evidence="7 10 13">Interacts with MCM1 (PubMed:10959837). Interacts with NDD1 (PubMed:12865300). Interacts with the origin recognition complex (ORC) composed of ORC1 to ORC6 (PubMed:22265405).</text>
</comment>
<comment type="interaction">
    <interactant intactId="EBI-6973">
        <id>P41813</id>
    </interactant>
    <interactant intactId="EBI-4440">
        <id>P32562</id>
        <label>CDC5</label>
    </interactant>
    <organismsDiffer>false</organismsDiffer>
    <experiments>2</experiments>
</comment>
<comment type="subcellular location">
    <subcellularLocation>
        <location evidence="15">Nucleus</location>
    </subcellularLocation>
    <subcellularLocation>
        <location evidence="9">Cytoplasm</location>
        <location evidence="9">Cytosol</location>
    </subcellularLocation>
    <text evidence="9">Relocalizes to the cytosol in response to hypoxia.</text>
</comment>
<comment type="domain">
    <text evidence="10">The FHA domain is necessary for the interaction with NDD1.</text>
</comment>
<comment type="disruption phenotype">
    <text evidence="4 7">Causes only a modest decline in CLB2 cluster genes expression, but this expression is abolished when both FKH1 and FKH2 are deleted (PubMed:10959837). Leads to a defect in silencing HMRa (PubMed:10747051). Causes a form of yeast pseudohyphal growth, when FKH2 is also deleted (PubMed:10747051). Affects cell-cycle progression and CLB2 mRNA expression (PubMed:10747051).</text>
</comment>
<comment type="miscellaneous">
    <text evidence="11">Present with 656 molecules/cell in log phase SD medium.</text>
</comment>
<gene>
    <name evidence="18" type="primary">FKH2</name>
    <name type="ordered locus">YNL068C</name>
    <name type="ORF">N2403</name>
    <name type="ORF">YNL2403C</name>
</gene>
<protein>
    <recommendedName>
        <fullName evidence="18">Fork head protein homolog 2</fullName>
    </recommendedName>
</protein>
<feature type="chain" id="PRO_0000091904" description="Fork head protein homolog 2">
    <location>
        <begin position="1"/>
        <end position="862"/>
    </location>
</feature>
<feature type="domain" description="FHA" evidence="1">
    <location>
        <begin position="83"/>
        <end position="152"/>
    </location>
</feature>
<feature type="DNA-binding region" description="Fork-head" evidence="2">
    <location>
        <begin position="339"/>
        <end position="430"/>
    </location>
</feature>
<feature type="region of interest" description="Disordered" evidence="3">
    <location>
        <begin position="498"/>
        <end position="528"/>
    </location>
</feature>
<feature type="region of interest" description="Disordered" evidence="3">
    <location>
        <begin position="611"/>
        <end position="663"/>
    </location>
</feature>
<feature type="region of interest" description="Disordered" evidence="3">
    <location>
        <begin position="698"/>
        <end position="730"/>
    </location>
</feature>
<feature type="region of interest" description="Disordered" evidence="3">
    <location>
        <begin position="750"/>
        <end position="846"/>
    </location>
</feature>
<feature type="compositionally biased region" description="Low complexity" evidence="3">
    <location>
        <begin position="504"/>
        <end position="520"/>
    </location>
</feature>
<feature type="compositionally biased region" description="Polar residues" evidence="3">
    <location>
        <begin position="611"/>
        <end position="644"/>
    </location>
</feature>
<feature type="compositionally biased region" description="Low complexity" evidence="3">
    <location>
        <begin position="645"/>
        <end position="655"/>
    </location>
</feature>
<feature type="compositionally biased region" description="Low complexity" evidence="3">
    <location>
        <begin position="712"/>
        <end position="726"/>
    </location>
</feature>
<feature type="compositionally biased region" description="Polar residues" evidence="3">
    <location>
        <begin position="750"/>
        <end position="770"/>
    </location>
</feature>
<feature type="compositionally biased region" description="Polar residues" evidence="3">
    <location>
        <begin position="778"/>
        <end position="788"/>
    </location>
</feature>
<feature type="compositionally biased region" description="Basic and acidic residues" evidence="3">
    <location>
        <begin position="804"/>
        <end position="829"/>
    </location>
</feature>
<feature type="compositionally biased region" description="Polar residues" evidence="3">
    <location>
        <begin position="830"/>
        <end position="844"/>
    </location>
</feature>
<feature type="modified residue" description="Phosphoserine" evidence="20">
    <location>
        <position position="708"/>
    </location>
</feature>
<feature type="modified residue" description="Phosphoserine" evidence="19 20">
    <location>
        <position position="832"/>
    </location>
</feature>
<feature type="modified residue" description="Phosphoserine" evidence="19 20">
    <location>
        <position position="833"/>
    </location>
</feature>
<evidence type="ECO:0000255" key="1">
    <source>
        <dbReference type="PROSITE-ProRule" id="PRU00086"/>
    </source>
</evidence>
<evidence type="ECO:0000255" key="2">
    <source>
        <dbReference type="PROSITE-ProRule" id="PRU00089"/>
    </source>
</evidence>
<evidence type="ECO:0000256" key="3">
    <source>
        <dbReference type="SAM" id="MobiDB-lite"/>
    </source>
</evidence>
<evidence type="ECO:0000269" key="4">
    <source>
    </source>
</evidence>
<evidence type="ECO:0000269" key="5">
    <source>
    </source>
</evidence>
<evidence type="ECO:0000269" key="6">
    <source>
    </source>
</evidence>
<evidence type="ECO:0000269" key="7">
    <source>
    </source>
</evidence>
<evidence type="ECO:0000269" key="8">
    <source>
    </source>
</evidence>
<evidence type="ECO:0000269" key="9">
    <source>
    </source>
</evidence>
<evidence type="ECO:0000269" key="10">
    <source>
    </source>
</evidence>
<evidence type="ECO:0000269" key="11">
    <source>
    </source>
</evidence>
<evidence type="ECO:0000269" key="12">
    <source>
    </source>
</evidence>
<evidence type="ECO:0000269" key="13">
    <source>
    </source>
</evidence>
<evidence type="ECO:0000269" key="14">
    <source>
    </source>
</evidence>
<evidence type="ECO:0000269" key="15">
    <source>
    </source>
</evidence>
<evidence type="ECO:0000269" key="16">
    <source>
    </source>
</evidence>
<evidence type="ECO:0000269" key="17">
    <source>
    </source>
</evidence>
<evidence type="ECO:0000303" key="18">
    <source>
    </source>
</evidence>
<evidence type="ECO:0007744" key="19">
    <source>
    </source>
</evidence>
<evidence type="ECO:0007744" key="20">
    <source>
    </source>
</evidence>
<reference key="1">
    <citation type="submission" date="1995-01" db="EMBL/GenBank/DDBJ databases">
        <title>Two fork head homologs in S. cerevisiae.</title>
        <authorList>
            <person name="Zhu G."/>
            <person name="Davis T.N."/>
        </authorList>
    </citation>
    <scope>NUCLEOTIDE SEQUENCE [GENOMIC DNA]</scope>
    <source>
        <strain>ATCC 204508 / S288c</strain>
    </source>
</reference>
<reference key="2">
    <citation type="journal article" date="1996" name="Yeast">
        <title>Sequencing a cosmid clone of Saccharomyces cerevisiae chromosome XIV reveals 12 new open reading frames (ORFs) and an ancient duplication of six ORFs.</title>
        <authorList>
            <person name="Poehlmann R."/>
            <person name="Philippsen P."/>
        </authorList>
    </citation>
    <scope>NUCLEOTIDE SEQUENCE [GENOMIC DNA]</scope>
    <source>
        <strain>ATCC 96604 / S288c / FY1679</strain>
    </source>
</reference>
<reference key="3">
    <citation type="journal article" date="1997" name="Nature">
        <title>The nucleotide sequence of Saccharomyces cerevisiae chromosome XIV and its evolutionary implications.</title>
        <authorList>
            <person name="Philippsen P."/>
            <person name="Kleine K."/>
            <person name="Poehlmann R."/>
            <person name="Duesterhoeft A."/>
            <person name="Hamberg K."/>
            <person name="Hegemann J.H."/>
            <person name="Obermaier B."/>
            <person name="Urrestarazu L.A."/>
            <person name="Aert R."/>
            <person name="Albermann K."/>
            <person name="Altmann R."/>
            <person name="Andre B."/>
            <person name="Baladron V."/>
            <person name="Ballesta J.P.G."/>
            <person name="Becam A.-M."/>
            <person name="Beinhauer J.D."/>
            <person name="Boskovic J."/>
            <person name="Buitrago M.J."/>
            <person name="Bussereau F."/>
            <person name="Coster F."/>
            <person name="Crouzet M."/>
            <person name="D'Angelo M."/>
            <person name="Dal Pero F."/>
            <person name="De Antoni A."/>
            <person name="del Rey F."/>
            <person name="Doignon F."/>
            <person name="Domdey H."/>
            <person name="Dubois E."/>
            <person name="Fiedler T.A."/>
            <person name="Fleig U."/>
            <person name="Floeth M."/>
            <person name="Fritz C."/>
            <person name="Gaillardin C."/>
            <person name="Garcia-Cantalejo J.M."/>
            <person name="Glansdorff N."/>
            <person name="Goffeau A."/>
            <person name="Gueldener U."/>
            <person name="Herbert C.J."/>
            <person name="Heumann K."/>
            <person name="Heuss-Neitzel D."/>
            <person name="Hilbert H."/>
            <person name="Hinni K."/>
            <person name="Iraqui Houssaini I."/>
            <person name="Jacquet M."/>
            <person name="Jimenez A."/>
            <person name="Jonniaux J.-L."/>
            <person name="Karpfinger-Hartl L."/>
            <person name="Lanfranchi G."/>
            <person name="Lepingle A."/>
            <person name="Levesque H."/>
            <person name="Lyck R."/>
            <person name="Maftahi M."/>
            <person name="Mallet L."/>
            <person name="Maurer C.T.C."/>
            <person name="Messenguy F."/>
            <person name="Mewes H.-W."/>
            <person name="Moestl D."/>
            <person name="Nasr F."/>
            <person name="Nicaud J.-M."/>
            <person name="Niedenthal R.K."/>
            <person name="Pandolfo D."/>
            <person name="Pierard A."/>
            <person name="Piravandi E."/>
            <person name="Planta R.J."/>
            <person name="Pohl T.M."/>
            <person name="Purnelle B."/>
            <person name="Rebischung C."/>
            <person name="Remacha M.A."/>
            <person name="Revuelta J.L."/>
            <person name="Rinke M."/>
            <person name="Saiz J.E."/>
            <person name="Sartorello F."/>
            <person name="Scherens B."/>
            <person name="Sen-Gupta M."/>
            <person name="Soler-Mira A."/>
            <person name="Urbanus J.H.M."/>
            <person name="Valle G."/>
            <person name="Van Dyck L."/>
            <person name="Verhasselt P."/>
            <person name="Vierendeels F."/>
            <person name="Vissers S."/>
            <person name="Voet M."/>
            <person name="Volckaert G."/>
            <person name="Wach A."/>
            <person name="Wambutt R."/>
            <person name="Wedler H."/>
            <person name="Zollner A."/>
            <person name="Hani J."/>
        </authorList>
    </citation>
    <scope>NUCLEOTIDE SEQUENCE [LARGE SCALE GENOMIC DNA]</scope>
    <source>
        <strain>ATCC 204508 / S288c</strain>
    </source>
</reference>
<reference key="4">
    <citation type="journal article" date="2014" name="G3 (Bethesda)">
        <title>The reference genome sequence of Saccharomyces cerevisiae: Then and now.</title>
        <authorList>
            <person name="Engel S.R."/>
            <person name="Dietrich F.S."/>
            <person name="Fisk D.G."/>
            <person name="Binkley G."/>
            <person name="Balakrishnan R."/>
            <person name="Costanzo M.C."/>
            <person name="Dwight S.S."/>
            <person name="Hitz B.C."/>
            <person name="Karra K."/>
            <person name="Nash R.S."/>
            <person name="Weng S."/>
            <person name="Wong E.D."/>
            <person name="Lloyd P."/>
            <person name="Skrzypek M.S."/>
            <person name="Miyasato S.R."/>
            <person name="Simison M."/>
            <person name="Cherry J.M."/>
        </authorList>
    </citation>
    <scope>GENOME REANNOTATION</scope>
    <source>
        <strain>ATCC 204508 / S288c</strain>
    </source>
</reference>
<reference key="5">
    <citation type="journal article" date="1995" name="Yeast">
        <title>The sequence of a 44 420 bp fragment located on the left arm of chromosome XIV from Saccharomyces cerevisiae.</title>
        <authorList>
            <person name="Bergez P."/>
            <person name="Doignon F."/>
            <person name="Crouzet M."/>
        </authorList>
    </citation>
    <scope>NUCLEOTIDE SEQUENCE [GENOMIC DNA] OF 1-440</scope>
    <source>
        <strain>S288c / FY1676</strain>
    </source>
</reference>
<reference key="6">
    <citation type="journal article" date="1996" name="Yeast">
        <authorList>
            <person name="Bergez P."/>
            <person name="Doignon F."/>
            <person name="Crouzet M."/>
        </authorList>
    </citation>
    <scope>ERRATUM OF PUBMED:8533472</scope>
</reference>
<reference key="7">
    <citation type="journal article" date="2000" name="Curr. Biol.">
        <title>Forkhead transcription factors, Fkh1p and Fkh2p, collaborate with Mcm1p to control transcription required for M-phase.</title>
        <authorList>
            <person name="Kumar R."/>
            <person name="Reynolds D.M."/>
            <person name="Shevchenko A."/>
            <person name="Shevchenko A."/>
            <person name="Goldstone S.D."/>
            <person name="Dalton S."/>
        </authorList>
    </citation>
    <scope>FUNCTION</scope>
    <scope>INTERACTION WITH MCM1</scope>
    <scope>DNA-BINDING</scope>
    <scope>DISRUPTION PHENOTYPE</scope>
</reference>
<reference key="8">
    <citation type="journal article" date="2000" name="Genetics">
        <title>Forkhead genes in transcriptional silencing, cell morphology and the cell cycle. Overlapping and distinct functions for FKH1 and FKH2 in Saccharomyces cerevisiae.</title>
        <authorList>
            <person name="Hollenhorst P.C."/>
            <person name="Bose M.E."/>
            <person name="Mielke M.R."/>
            <person name="Mueller U."/>
            <person name="Fox C.A."/>
        </authorList>
    </citation>
    <scope>FUNCTION</scope>
    <scope>DISRUPTION PHENOTYPE</scope>
</reference>
<reference key="9">
    <citation type="journal article" date="2000" name="Nature">
        <title>Two yeast forkhead genes regulate the cell cycle and pseudohyphal growth.</title>
        <authorList>
            <person name="Zhu G."/>
            <person name="Spellman P.T."/>
            <person name="Volpe T."/>
            <person name="Brown P.O."/>
            <person name="Botstein D."/>
            <person name="Davis T.N."/>
            <person name="Futcher B."/>
        </authorList>
    </citation>
    <scope>FUNCTION</scope>
</reference>
<reference key="10">
    <citation type="journal article" date="2000" name="Nature">
        <title>Forkhead-like transcription factors recruit Ndd1 to the chromatin of G2/M-specific promoters.</title>
        <authorList>
            <person name="Koranda M."/>
            <person name="Schleiffer A."/>
            <person name="Endler L."/>
            <person name="Ammerer G."/>
        </authorList>
    </citation>
    <scope>FUNCTION</scope>
</reference>
<reference key="11">
    <citation type="journal article" date="2001" name="Genes Dev.">
        <title>Mechanisms controlling differential promoter-occupancy by the yeast forkhead proteins Fkh1p and Fkh2p: implications for regulating the cell cycle and differentiation.</title>
        <authorList>
            <person name="Hollenhorst P.C."/>
            <person name="Pietz G."/>
            <person name="Fox C.A."/>
        </authorList>
    </citation>
    <scope>FUNCTION</scope>
    <scope>DNA-BINDING</scope>
</reference>
<reference key="12">
    <citation type="journal article" date="2003" name="Genes Dev.">
        <title>Recruitment of Thr 319-phosphorylated Ndd1p to the FHA domain of Fkh2p requires Clb kinase activity: a mechanism for CLB cluster gene activation.</title>
        <authorList>
            <person name="Reynolds D."/>
            <person name="Shi B.J."/>
            <person name="McLean C."/>
            <person name="Katsis F."/>
            <person name="Kemp B."/>
            <person name="Dalton S."/>
        </authorList>
    </citation>
    <scope>DOMAIN</scope>
    <scope>INTERACTION WITH NDD1</scope>
</reference>
<reference key="13">
    <citation type="journal article" date="2003" name="Nature">
        <title>Global analysis of protein expression in yeast.</title>
        <authorList>
            <person name="Ghaemmaghami S."/>
            <person name="Huh W.-K."/>
            <person name="Bower K."/>
            <person name="Howson R.W."/>
            <person name="Belle A."/>
            <person name="Dephoure N."/>
            <person name="O'Shea E.K."/>
            <person name="Weissman J.S."/>
        </authorList>
    </citation>
    <scope>LEVEL OF PROTEIN EXPRESSION [LARGE SCALE ANALYSIS]</scope>
</reference>
<reference key="14">
    <citation type="journal article" date="2003" name="Science">
        <title>Regulation of elongating RNA polymerase II by forkhead transcription factors in yeast.</title>
        <authorList>
            <person name="Morillon A."/>
            <person name="O'Sullivan J."/>
            <person name="Azad A."/>
            <person name="Proudfoot N."/>
            <person name="Mellor J."/>
        </authorList>
    </citation>
    <scope>FUNCTION</scope>
</reference>
<reference key="15">
    <citation type="journal article" date="2007" name="Mol. Cell. Biol.">
        <title>The Isw2 chromatin-remodeling ATPase cooperates with the Fkh2 transcription factor to repress transcription of the B-type cyclin gene CLB2.</title>
        <authorList>
            <person name="Sherriff J.A."/>
            <person name="Kent N.A."/>
            <person name="Mellor J."/>
        </authorList>
    </citation>
    <scope>FUNCTION</scope>
</reference>
<reference key="16">
    <citation type="journal article" date="2007" name="Proc. Natl. Acad. Sci. U.S.A.">
        <title>Analysis of phosphorylation sites on proteins from Saccharomyces cerevisiae by electron transfer dissociation (ETD) mass spectrometry.</title>
        <authorList>
            <person name="Chi A."/>
            <person name="Huttenhower C."/>
            <person name="Geer L.Y."/>
            <person name="Coon J.J."/>
            <person name="Syka J.E.P."/>
            <person name="Bai D.L."/>
            <person name="Shabanowitz J."/>
            <person name="Burke D.J."/>
            <person name="Troyanskaya O.G."/>
            <person name="Hunt D.F."/>
        </authorList>
    </citation>
    <scope>IDENTIFICATION BY MASS SPECTROMETRY [LARGE SCALE ANALYSIS]</scope>
</reference>
<reference key="17">
    <citation type="journal article" date="2008" name="Mol. Cell. Proteomics">
        <title>A multidimensional chromatography technology for in-depth phosphoproteome analysis.</title>
        <authorList>
            <person name="Albuquerque C.P."/>
            <person name="Smolka M.B."/>
            <person name="Payne S.H."/>
            <person name="Bafna V."/>
            <person name="Eng J."/>
            <person name="Zhou H."/>
        </authorList>
    </citation>
    <scope>PHOSPHORYLATION [LARGE SCALE ANALYSIS] AT SER-832 AND SER-833</scope>
    <scope>IDENTIFICATION BY MASS SPECTROMETRY [LARGE SCALE ANALYSIS]</scope>
</reference>
<reference key="18">
    <citation type="journal article" date="2009" name="Science">
        <title>Global analysis of Cdk1 substrate phosphorylation sites provides insights into evolution.</title>
        <authorList>
            <person name="Holt L.J."/>
            <person name="Tuch B.B."/>
            <person name="Villen J."/>
            <person name="Johnson A.D."/>
            <person name="Gygi S.P."/>
            <person name="Morgan D.O."/>
        </authorList>
    </citation>
    <scope>PHOSPHORYLATION [LARGE SCALE ANALYSIS] AT SER-708; SER-832 AND SER-833</scope>
    <scope>IDENTIFICATION BY MASS SPECTROMETRY [LARGE SCALE ANALYSIS]</scope>
</reference>
<reference key="19">
    <citation type="journal article" date="2012" name="Cell">
        <title>Forkhead transcription factors establish origin timing and long-range clustering in S. cerevisiae.</title>
        <authorList>
            <person name="Knott S.R."/>
            <person name="Peace J.M."/>
            <person name="Ostrow A.Z."/>
            <person name="Gan Y."/>
            <person name="Rex A.E."/>
            <person name="Viggiani C.J."/>
            <person name="Tavare S."/>
            <person name="Aparicio O.M."/>
        </authorList>
    </citation>
    <scope>FUNCTION</scope>
    <scope>INTERACTION WITH ORC</scope>
</reference>
<reference key="20">
    <citation type="journal article" date="2012" name="Cell Biosci.">
        <title>The nuclear localization of SWI/SNF proteins is subjected to oxygen regulation.</title>
        <authorList>
            <person name="Dastidar R.G."/>
            <person name="Hooda J."/>
            <person name="Shah A."/>
            <person name="Cao T.M."/>
            <person name="Henke R.M."/>
            <person name="Zhang L."/>
        </authorList>
    </citation>
    <scope>SUBCELLULAR LOCATION</scope>
</reference>
<reference key="21">
    <citation type="journal article" date="2012" name="PLoS Genet.">
        <title>The yeast forkhead transcription factors fkh1 and fkh2 regulate lifespan and stress response together with the anaphase-promoting complex.</title>
        <authorList>
            <person name="Postnikoff S.D."/>
            <person name="Malo M.E."/>
            <person name="Wong B."/>
            <person name="Harkness T.A."/>
        </authorList>
    </citation>
    <scope>FUNCTION</scope>
</reference>
<reference key="22">
    <citation type="journal article" date="2014" name="PLoS ONE">
        <title>Fkh1 and Fkh2 bind multiple chromosomal elements in the S. cerevisiae genome with distinct specificities and cell cycle dynamics.</title>
        <authorList>
            <person name="Ostrow A.Z."/>
            <person name="Nellimoottil T."/>
            <person name="Knott S.R."/>
            <person name="Fox C.A."/>
            <person name="Tavare S."/>
            <person name="Aparicio O.M."/>
        </authorList>
    </citation>
    <scope>FUNCTION</scope>
    <scope>DNA-BINDING</scope>
</reference>
<reference key="23">
    <citation type="journal article" date="2016" name="Genome Res.">
        <title>Quantitative BrdU immunoprecipitation method demonstrates that Fkh1 and Fkh2 are rate-limiting activators of replication origins that reprogram replication timing in G1 phase.</title>
        <authorList>
            <person name="Peace J.M."/>
            <person name="Villwock S.K."/>
            <person name="Zeytounian J.L."/>
            <person name="Gan Y."/>
            <person name="Aparicio O.M."/>
        </authorList>
    </citation>
    <scope>FUNCTION</scope>
</reference>